<gene>
    <name type="primary">ACTR1A</name>
</gene>
<evidence type="ECO:0000250" key="1">
    <source>
        <dbReference type="UniProtKB" id="P61163"/>
    </source>
</evidence>
<evidence type="ECO:0000269" key="2">
    <source>
    </source>
</evidence>
<evidence type="ECO:0000269" key="3">
    <source>
    </source>
</evidence>
<evidence type="ECO:0000269" key="4">
    <source>
    </source>
</evidence>
<evidence type="ECO:0000269" key="5">
    <source>
    </source>
</evidence>
<evidence type="ECO:0000269" key="6">
    <source>
    </source>
</evidence>
<evidence type="ECO:0000303" key="7">
    <source>
    </source>
</evidence>
<evidence type="ECO:0000305" key="8"/>
<evidence type="ECO:0000305" key="9">
    <source>
    </source>
</evidence>
<evidence type="ECO:0000312" key="10">
    <source>
        <dbReference type="Proteomes" id="UP000008227"/>
    </source>
</evidence>
<evidence type="ECO:0007744" key="11">
    <source>
        <dbReference type="PDB" id="5ADX"/>
    </source>
</evidence>
<evidence type="ECO:0007744" key="12">
    <source>
        <dbReference type="PDB" id="5AFU"/>
    </source>
</evidence>
<evidence type="ECO:0007744" key="13">
    <source>
        <dbReference type="PDB" id="5NW4"/>
    </source>
</evidence>
<evidence type="ECO:0007744" key="14">
    <source>
        <dbReference type="PDB" id="6F1T"/>
    </source>
</evidence>
<evidence type="ECO:0007744" key="15">
    <source>
        <dbReference type="PDB" id="6F1U"/>
    </source>
</evidence>
<evidence type="ECO:0007744" key="16">
    <source>
        <dbReference type="PDB" id="6ZNL"/>
    </source>
</evidence>
<evidence type="ECO:0007744" key="17">
    <source>
        <dbReference type="PDB" id="6ZNM"/>
    </source>
</evidence>
<evidence type="ECO:0007744" key="18">
    <source>
        <dbReference type="PDB" id="6ZNN"/>
    </source>
</evidence>
<evidence type="ECO:0007744" key="19">
    <source>
        <dbReference type="PDB" id="6ZNO"/>
    </source>
</evidence>
<evidence type="ECO:0007744" key="20">
    <source>
        <dbReference type="PDB" id="6ZO4"/>
    </source>
</evidence>
<evidence type="ECO:0007744" key="21">
    <source>
        <dbReference type="PDB" id="7Z8F"/>
    </source>
</evidence>
<evidence type="ECO:0007744" key="22">
    <source>
        <dbReference type="PDB" id="7Z8I"/>
    </source>
</evidence>
<evidence type="ECO:0007744" key="23">
    <source>
        <dbReference type="PDB" id="7Z8K"/>
    </source>
</evidence>
<evidence type="ECO:0007744" key="24">
    <source>
        <dbReference type="PDB" id="7Z8M"/>
    </source>
</evidence>
<evidence type="ECO:0007829" key="25">
    <source>
        <dbReference type="PDB" id="6F1T"/>
    </source>
</evidence>
<evidence type="ECO:0007829" key="26">
    <source>
        <dbReference type="PDB" id="7Z8I"/>
    </source>
</evidence>
<evidence type="ECO:0007829" key="27">
    <source>
        <dbReference type="PDB" id="7Z8M"/>
    </source>
</evidence>
<dbReference type="EMBL" id="AEMK02000096">
    <property type="status" value="NOT_ANNOTATED_CDS"/>
    <property type="molecule type" value="Genomic_DNA"/>
</dbReference>
<dbReference type="EMBL" id="DQIR01209069">
    <property type="protein sequence ID" value="HDB64546.1"/>
    <property type="molecule type" value="Transcribed_RNA"/>
</dbReference>
<dbReference type="PDB" id="5ADX">
    <property type="method" value="EM"/>
    <property type="resolution" value="4.00 A"/>
    <property type="chains" value="A/B/C/D/E/F/G/I=7-310"/>
</dbReference>
<dbReference type="PDB" id="5AFU">
    <property type="method" value="EM"/>
    <property type="resolution" value="3.50 A"/>
    <property type="chains" value="A/B/C/D/E/F/G/I=7-310"/>
</dbReference>
<dbReference type="PDB" id="5NW4">
    <property type="method" value="EM"/>
    <property type="resolution" value="8.70 A"/>
    <property type="chains" value="G/H/O/P/Q/T/U/W=1-310"/>
</dbReference>
<dbReference type="PDB" id="6F1T">
    <property type="method" value="EM"/>
    <property type="resolution" value="3.50 A"/>
    <property type="chains" value="A/B/C/D/E/F/G/I=1-310"/>
</dbReference>
<dbReference type="PDB" id="6F1U">
    <property type="method" value="EM"/>
    <property type="resolution" value="3.40 A"/>
    <property type="chains" value="B/D/F=1-310"/>
</dbReference>
<dbReference type="PDB" id="6F38">
    <property type="method" value="EM"/>
    <property type="resolution" value="6.70 A"/>
    <property type="chains" value="A/B/C/D/E/F/G/I=1-310"/>
</dbReference>
<dbReference type="PDB" id="6F3A">
    <property type="method" value="EM"/>
    <property type="resolution" value="8.20 A"/>
    <property type="chains" value="A/B/C/D/E/F/G/I=1-310"/>
</dbReference>
<dbReference type="PDB" id="6ZNL">
    <property type="method" value="EM"/>
    <property type="resolution" value="3.80 A"/>
    <property type="chains" value="A/B/C/D/E/F/G/I=1-310"/>
</dbReference>
<dbReference type="PDB" id="6ZNM">
    <property type="method" value="EM"/>
    <property type="resolution" value="4.10 A"/>
    <property type="chains" value="G/I=1-310"/>
</dbReference>
<dbReference type="PDB" id="6ZNN">
    <property type="method" value="EM"/>
    <property type="resolution" value="4.50 A"/>
    <property type="chains" value="G/I=1-310"/>
</dbReference>
<dbReference type="PDB" id="6ZNO">
    <property type="method" value="EM"/>
    <property type="resolution" value="6.80 A"/>
    <property type="chains" value="G/I=1-310"/>
</dbReference>
<dbReference type="PDB" id="6ZO4">
    <property type="method" value="EM"/>
    <property type="resolution" value="8.20 A"/>
    <property type="chains" value="G/I=1-310"/>
</dbReference>
<dbReference type="PDB" id="7Z8F">
    <property type="method" value="EM"/>
    <property type="resolution" value="20.00 A"/>
    <property type="chains" value="A/B/C/D/E/F/G/I=1-310"/>
</dbReference>
<dbReference type="PDB" id="7Z8I">
    <property type="method" value="EM"/>
    <property type="resolution" value="3.30 A"/>
    <property type="chains" value="A/B/C/D/E/F=1-310"/>
</dbReference>
<dbReference type="PDB" id="7Z8K">
    <property type="method" value="EM"/>
    <property type="resolution" value="4.37 A"/>
    <property type="chains" value="F=1-310"/>
</dbReference>
<dbReference type="PDB" id="7Z8M">
    <property type="method" value="EM"/>
    <property type="resolution" value="3.37 A"/>
    <property type="chains" value="G/I=1-310"/>
</dbReference>
<dbReference type="PDB" id="8PTK">
    <property type="method" value="EM"/>
    <property type="resolution" value="10.00 A"/>
    <property type="chains" value="A/B/C/D/E/F/G/I=1-310"/>
</dbReference>
<dbReference type="PDBsum" id="5ADX"/>
<dbReference type="PDBsum" id="5AFU"/>
<dbReference type="PDBsum" id="5NW4"/>
<dbReference type="PDBsum" id="6F1T"/>
<dbReference type="PDBsum" id="6F1U"/>
<dbReference type="PDBsum" id="6F38"/>
<dbReference type="PDBsum" id="6F3A"/>
<dbReference type="PDBsum" id="6ZNL"/>
<dbReference type="PDBsum" id="6ZNM"/>
<dbReference type="PDBsum" id="6ZNN"/>
<dbReference type="PDBsum" id="6ZNO"/>
<dbReference type="PDBsum" id="6ZO4"/>
<dbReference type="PDBsum" id="7Z8F"/>
<dbReference type="PDBsum" id="7Z8I"/>
<dbReference type="PDBsum" id="7Z8K"/>
<dbReference type="PDBsum" id="7Z8M"/>
<dbReference type="PDBsum" id="8PTK"/>
<dbReference type="EMDB" id="EMD-11313"/>
<dbReference type="EMDB" id="EMD-11317"/>
<dbReference type="EMDB" id="EMD-11318"/>
<dbReference type="EMDB" id="EMD-11319"/>
<dbReference type="EMDB" id="EMD-14549"/>
<dbReference type="EMDB" id="EMD-14552"/>
<dbReference type="EMDB" id="EMD-14555"/>
<dbReference type="EMDB" id="EMD-14559"/>
<dbReference type="EMDB" id="EMD-17873"/>
<dbReference type="EMDB" id="EMD-3706"/>
<dbReference type="EMDB" id="EMD-4168"/>
<dbReference type="EMDB" id="EMD-4177"/>
<dbReference type="SMR" id="F2Z5G5"/>
<dbReference type="PeptideAtlas" id="F2Z5G5"/>
<dbReference type="PRIDE" id="F2Z5G5"/>
<dbReference type="Ensembl" id="ENSSSCT00000011578.4">
    <property type="protein sequence ID" value="ENSSSCP00000011276.3"/>
    <property type="gene ID" value="ENSSSCG00000010585.5"/>
</dbReference>
<dbReference type="Ensembl" id="ENSSSCT00025106107.1">
    <property type="protein sequence ID" value="ENSSSCP00025047567.1"/>
    <property type="gene ID" value="ENSSSCG00025076566.1"/>
</dbReference>
<dbReference type="Ensembl" id="ENSSSCT00085004926">
    <property type="protein sequence ID" value="ENSSSCP00085003611"/>
    <property type="gene ID" value="ENSSSCG00085002748"/>
</dbReference>
<dbReference type="VGNC" id="VGNC:85049">
    <property type="gene designation" value="ACTR1A"/>
</dbReference>
<dbReference type="eggNOG" id="KOG0676">
    <property type="taxonomic scope" value="Eukaryota"/>
</dbReference>
<dbReference type="GeneTree" id="ENSGT00940000155782"/>
<dbReference type="HOGENOM" id="CLU_027965_0_1_1"/>
<dbReference type="TreeFam" id="TF300420"/>
<dbReference type="Reactome" id="R-SSC-2132295">
    <property type="pathway name" value="MHC class II antigen presentation"/>
</dbReference>
<dbReference type="Reactome" id="R-SSC-2565942">
    <property type="pathway name" value="Regulation of PLK1 Activity at G2/M Transition"/>
</dbReference>
<dbReference type="Reactome" id="R-SSC-3371497">
    <property type="pathway name" value="HSP90 chaperone cycle for steroid hormone receptors (SHR) in the presence of ligand"/>
</dbReference>
<dbReference type="Reactome" id="R-SSC-380259">
    <property type="pathway name" value="Loss of Nlp from mitotic centrosomes"/>
</dbReference>
<dbReference type="Reactome" id="R-SSC-380270">
    <property type="pathway name" value="Recruitment of mitotic centrosome proteins and complexes"/>
</dbReference>
<dbReference type="Reactome" id="R-SSC-380284">
    <property type="pathway name" value="Loss of proteins required for interphase microtubule organization from the centrosome"/>
</dbReference>
<dbReference type="Reactome" id="R-SSC-380320">
    <property type="pathway name" value="Recruitment of NuMA to mitotic centrosomes"/>
</dbReference>
<dbReference type="Reactome" id="R-SSC-5620912">
    <property type="pathway name" value="Anchoring of the basal body to the plasma membrane"/>
</dbReference>
<dbReference type="Reactome" id="R-SSC-6807878">
    <property type="pathway name" value="COPI-mediated anterograde transport"/>
</dbReference>
<dbReference type="Reactome" id="R-SSC-8854518">
    <property type="pathway name" value="AURKA Activation by TPX2"/>
</dbReference>
<dbReference type="Proteomes" id="UP000008227">
    <property type="component" value="Chromosome 14"/>
</dbReference>
<dbReference type="Proteomes" id="UP000314985">
    <property type="component" value="Unplaced"/>
</dbReference>
<dbReference type="Proteomes" id="UP000694570">
    <property type="component" value="Unplaced"/>
</dbReference>
<dbReference type="Proteomes" id="UP000694571">
    <property type="component" value="Unplaced"/>
</dbReference>
<dbReference type="Proteomes" id="UP000694720">
    <property type="component" value="Unplaced"/>
</dbReference>
<dbReference type="Proteomes" id="UP000694722">
    <property type="component" value="Unplaced"/>
</dbReference>
<dbReference type="Proteomes" id="UP000694723">
    <property type="component" value="Unplaced"/>
</dbReference>
<dbReference type="Proteomes" id="UP000694724">
    <property type="component" value="Unplaced"/>
</dbReference>
<dbReference type="Proteomes" id="UP000694725">
    <property type="component" value="Unplaced"/>
</dbReference>
<dbReference type="Proteomes" id="UP000694726">
    <property type="component" value="Unplaced"/>
</dbReference>
<dbReference type="Proteomes" id="UP000694727">
    <property type="component" value="Unplaced"/>
</dbReference>
<dbReference type="Proteomes" id="UP000694728">
    <property type="component" value="Unplaced"/>
</dbReference>
<dbReference type="Bgee" id="ENSSSCG00000010585">
    <property type="expression patterns" value="Expressed in prefrontal cortex and 42 other cell types or tissues"/>
</dbReference>
<dbReference type="ExpressionAtlas" id="F2Z5G5">
    <property type="expression patterns" value="baseline and differential"/>
</dbReference>
<dbReference type="GO" id="GO:0005938">
    <property type="term" value="C:cell cortex"/>
    <property type="evidence" value="ECO:0007669"/>
    <property type="project" value="UniProtKB-SubCell"/>
</dbReference>
<dbReference type="GO" id="GO:0005813">
    <property type="term" value="C:centrosome"/>
    <property type="evidence" value="ECO:0007669"/>
    <property type="project" value="UniProtKB-SubCell"/>
</dbReference>
<dbReference type="GO" id="GO:0005869">
    <property type="term" value="C:dynactin complex"/>
    <property type="evidence" value="ECO:0000318"/>
    <property type="project" value="GO_Central"/>
</dbReference>
<dbReference type="GO" id="GO:0005524">
    <property type="term" value="F:ATP binding"/>
    <property type="evidence" value="ECO:0007669"/>
    <property type="project" value="UniProtKB-KW"/>
</dbReference>
<dbReference type="CDD" id="cd10216">
    <property type="entry name" value="ASKHA_NBD_Arp1"/>
    <property type="match status" value="1"/>
</dbReference>
<dbReference type="FunFam" id="3.30.420.40:FF:000205">
    <property type="entry name" value="Actin, alpha skeletal muscle"/>
    <property type="match status" value="1"/>
</dbReference>
<dbReference type="FunFam" id="3.30.420.40:FF:000502">
    <property type="entry name" value="Actin-Related Proteins"/>
    <property type="match status" value="1"/>
</dbReference>
<dbReference type="FunFam" id="3.90.640.10:FF:000008">
    <property type="entry name" value="alpha-centractin isoform X1"/>
    <property type="match status" value="1"/>
</dbReference>
<dbReference type="Gene3D" id="3.30.420.40">
    <property type="match status" value="2"/>
</dbReference>
<dbReference type="Gene3D" id="3.90.640.10">
    <property type="entry name" value="Actin, Chain A, domain 4"/>
    <property type="match status" value="1"/>
</dbReference>
<dbReference type="InterPro" id="IPR004000">
    <property type="entry name" value="Actin"/>
</dbReference>
<dbReference type="InterPro" id="IPR020902">
    <property type="entry name" value="Actin/actin-like_CS"/>
</dbReference>
<dbReference type="InterPro" id="IPR043129">
    <property type="entry name" value="ATPase_NBD"/>
</dbReference>
<dbReference type="PANTHER" id="PTHR11937">
    <property type="entry name" value="ACTIN"/>
    <property type="match status" value="1"/>
</dbReference>
<dbReference type="Pfam" id="PF00022">
    <property type="entry name" value="Actin"/>
    <property type="match status" value="1"/>
</dbReference>
<dbReference type="PRINTS" id="PR00190">
    <property type="entry name" value="ACTIN"/>
</dbReference>
<dbReference type="SMART" id="SM00268">
    <property type="entry name" value="ACTIN"/>
    <property type="match status" value="1"/>
</dbReference>
<dbReference type="SUPFAM" id="SSF53067">
    <property type="entry name" value="Actin-like ATPase domain"/>
    <property type="match status" value="2"/>
</dbReference>
<dbReference type="PROSITE" id="PS01132">
    <property type="entry name" value="ACTINS_ACT_LIKE"/>
    <property type="match status" value="1"/>
</dbReference>
<name>ACTZ_PIG</name>
<proteinExistence type="evidence at protein level"/>
<organism evidence="10">
    <name type="scientific">Sus scrofa</name>
    <name type="common">Pig</name>
    <dbReference type="NCBI Taxonomy" id="9823"/>
    <lineage>
        <taxon>Eukaryota</taxon>
        <taxon>Metazoa</taxon>
        <taxon>Chordata</taxon>
        <taxon>Craniata</taxon>
        <taxon>Vertebrata</taxon>
        <taxon>Euteleostomi</taxon>
        <taxon>Mammalia</taxon>
        <taxon>Eutheria</taxon>
        <taxon>Laurasiatheria</taxon>
        <taxon>Artiodactyla</taxon>
        <taxon>Suina</taxon>
        <taxon>Suidae</taxon>
        <taxon>Sus</taxon>
    </lineage>
</organism>
<sequence length="349" mass="39371">MESYDVIANQPVVIDNGSGVIKAGFAGDQIPKYCFPNYVGRPKHVRVMAGALEGDIFIGPKAEEHRGLLSIRYPMEHGIVKDWNDMERIWQYVYSKDQLQTFSEEHPVLLTEAPLNPRKNRERAAEVFFETFNVPALFISMQAVLSLYATGRTTGVVLDSGDGVTHAVPIYEGFAMPHSIMRIDIAGRDVSRFLRLYLRKEGYDFHSSSEFEIVKAIKERACYLSINPQKDETLETEKAQYYLPDGSTIEIGPSRFRAPELLFRPDLIGEESEGIHEVLVFAIQKSDMDLRRTLFSNIVLSGGSTLFKGWSLPSAPCPRKLPQSCQAQTPREMTRESPFLPIQVLVTGY</sequence>
<reference evidence="10" key="1">
    <citation type="submission" date="2009-11" db="EMBL/GenBank/DDBJ databases">
        <authorList>
            <consortium name="Porcine genome sequencing project"/>
        </authorList>
    </citation>
    <scope>NUCLEOTIDE SEQUENCE [LARGE SCALE GENOMIC DNA]</scope>
    <source>
        <strain evidence="10">Duroc</strain>
    </source>
</reference>
<reference evidence="13" key="2">
    <citation type="journal article" date="2017" name="Cell">
        <title>Cryo-EM Reveals How Human Cytoplasmic Dynein Is Auto-inhibited and Activated.</title>
        <authorList>
            <person name="Zhang K."/>
            <person name="Foster H.E."/>
            <person name="Rondelet A."/>
            <person name="Lacey S.E."/>
            <person name="Bahi-Buisson N."/>
            <person name="Bird A.W."/>
            <person name="Carter A.P."/>
        </authorList>
    </citation>
    <scope>STRUCTURE BY ELECTRON MICROSCOPY (8.70 ANGSTROMS) OF 1-376</scope>
</reference>
<reference evidence="11 12" key="3">
    <citation type="journal article" date="2015" name="Science">
        <title>The structure of the dynactin complex and its interaction with dynein.</title>
        <authorList>
            <person name="Urnavicius L."/>
            <person name="Zhang K."/>
            <person name="Diamant A.G."/>
            <person name="Motz C."/>
            <person name="Schlager M.A."/>
            <person name="Yu M."/>
            <person name="Patel N.A."/>
            <person name="Robinson C.V."/>
            <person name="Carter A.P."/>
        </authorList>
    </citation>
    <scope>STRUCTURE BY ELECTRON MICROSCOPY (4.00 ANGSTROMS) OF 1-71 AND 1-20</scope>
    <scope>FUNCTION</scope>
    <scope>SUBUNIT</scope>
</reference>
<reference evidence="14 15" key="4">
    <citation type="journal article" date="2018" name="Nature">
        <title>Cryo-EM shows how dynactin recruits two dyneins for faster movement.</title>
        <authorList>
            <person name="Urnavicius L."/>
            <person name="Lau C.K."/>
            <person name="Elshenawy M.M."/>
            <person name="Morales-Rios E."/>
            <person name="Motz C."/>
            <person name="Yildiz A."/>
            <person name="Carter A.P."/>
        </authorList>
    </citation>
    <scope>STRUCTURE BY ELECTRON MICROSCOPY (3.40 ANGSTROMS) OF 1-376</scope>
</reference>
<reference evidence="16 17 18 19 20" key="5">
    <citation type="journal article" date="2021" name="EMBO J.">
        <title>Cryo-EM reveals the complex architecture of dynactin's shoulder region and pointed end.</title>
        <authorList>
            <person name="Lau C.K."/>
            <person name="O'Reilly F.J."/>
            <person name="Santhanam B."/>
            <person name="Lacey S.E."/>
            <person name="Rappsilber J."/>
            <person name="Carter A.P."/>
        </authorList>
    </citation>
    <scope>STRUCTURE BY ELECTRON MICROSCOPY (3.80 ANGSTROMS) OF 1-310</scope>
    <scope>SUBUNIT</scope>
    <scope>FUNCTION</scope>
</reference>
<reference evidence="21 22 23 24" key="6">
    <citation type="journal article" date="2022" name="Nature">
        <title>Structure of dynein-dynactin on microtubules shows tandem adaptor binding.</title>
        <authorList>
            <person name="Chaaban S."/>
            <person name="Carter A.P."/>
        </authorList>
    </citation>
    <scope>STRUCTURE BY ELECTRON MICROSCOPY (3.30 ANGSTROMS) OF 1-310</scope>
    <scope>SUBUNIT</scope>
    <scope>FUNCTION</scope>
</reference>
<comment type="function">
    <text evidence="2 3 4 5 6">Part of the ACTR1A/ACTB filament around which the dynactin complex is built. The dynactin multiprotein complex activates the molecular motor dynein for ultra-processive transport along microtubules.</text>
</comment>
<comment type="subunit">
    <text evidence="1 2 3 4 5 6">Part of the ACTR1A/ACTB filament around which the dynactin complex is built (PubMed:25814576, PubMed:28602352, PubMed:29420470, PubMed:33734450, PubMed:36071160). The filament contains 8 copies of ACTR1A and 1 ACTB. Interacts with dynein and adapters such as BICD2 (PubMed:25814576). Interacts with BCCIP (isoform 2/alpha) (By similarity).</text>
</comment>
<comment type="subcellular location">
    <subcellularLocation>
        <location evidence="9">Cytoplasm</location>
        <location evidence="9">Cytoskeleton</location>
    </subcellularLocation>
    <subcellularLocation>
        <location evidence="1">Cytoplasm</location>
        <location evidence="1">Cytoskeleton</location>
        <location evidence="1">Microtubule organizing center</location>
        <location evidence="1">Centrosome</location>
    </subcellularLocation>
    <subcellularLocation>
        <location evidence="1">Cytoplasm</location>
        <location evidence="1">Cell cortex</location>
    </subcellularLocation>
</comment>
<comment type="similarity">
    <text evidence="8">Belongs to the actin family. ARP1 subfamily.</text>
</comment>
<keyword id="KW-0002">3D-structure</keyword>
<keyword id="KW-0007">Acetylation</keyword>
<keyword id="KW-0067">ATP-binding</keyword>
<keyword id="KW-0963">Cytoplasm</keyword>
<keyword id="KW-0206">Cytoskeleton</keyword>
<keyword id="KW-0547">Nucleotide-binding</keyword>
<keyword id="KW-1185">Reference proteome</keyword>
<protein>
    <recommendedName>
        <fullName>Alpha-centractin</fullName>
        <shortName>Centractin</shortName>
    </recommendedName>
    <alternativeName>
        <fullName evidence="7">ARP1</fullName>
    </alternativeName>
</protein>
<accession>F2Z5G5</accession>
<feature type="chain" id="PRO_0000457460" description="Alpha-centractin">
    <location>
        <begin position="1"/>
        <end position="349"/>
    </location>
</feature>
<feature type="modified residue" description="N-acetylmethionine" evidence="1">
    <location>
        <position position="1"/>
    </location>
</feature>
<feature type="strand" evidence="26">
    <location>
        <begin position="12"/>
        <end position="16"/>
    </location>
</feature>
<feature type="strand" evidence="26">
    <location>
        <begin position="18"/>
        <end position="25"/>
    </location>
</feature>
<feature type="strand" evidence="26">
    <location>
        <begin position="35"/>
        <end position="37"/>
    </location>
</feature>
<feature type="strand" evidence="26">
    <location>
        <begin position="39"/>
        <end position="42"/>
    </location>
</feature>
<feature type="strand" evidence="26">
    <location>
        <begin position="44"/>
        <end position="46"/>
    </location>
</feature>
<feature type="strand" evidence="25">
    <location>
        <begin position="48"/>
        <end position="50"/>
    </location>
</feature>
<feature type="helix" evidence="26">
    <location>
        <begin position="60"/>
        <end position="64"/>
    </location>
</feature>
<feature type="helix" evidence="26">
    <location>
        <begin position="66"/>
        <end position="68"/>
    </location>
</feature>
<feature type="strand" evidence="26">
    <location>
        <begin position="69"/>
        <end position="72"/>
    </location>
</feature>
<feature type="strand" evidence="26">
    <location>
        <begin position="74"/>
        <end position="76"/>
    </location>
</feature>
<feature type="strand" evidence="26">
    <location>
        <begin position="79"/>
        <end position="81"/>
    </location>
</feature>
<feature type="helix" evidence="26">
    <location>
        <begin position="83"/>
        <end position="93"/>
    </location>
</feature>
<feature type="strand" evidence="27">
    <location>
        <begin position="95"/>
        <end position="99"/>
    </location>
</feature>
<feature type="turn" evidence="26">
    <location>
        <begin position="103"/>
        <end position="105"/>
    </location>
</feature>
<feature type="strand" evidence="26">
    <location>
        <begin position="108"/>
        <end position="111"/>
    </location>
</feature>
<feature type="helix" evidence="26">
    <location>
        <begin position="118"/>
        <end position="130"/>
    </location>
</feature>
<feature type="strand" evidence="26">
    <location>
        <begin position="135"/>
        <end position="140"/>
    </location>
</feature>
<feature type="helix" evidence="26">
    <location>
        <begin position="143"/>
        <end position="149"/>
    </location>
</feature>
<feature type="strand" evidence="26">
    <location>
        <begin position="153"/>
        <end position="160"/>
    </location>
</feature>
<feature type="strand" evidence="26">
    <location>
        <begin position="165"/>
        <end position="171"/>
    </location>
</feature>
<feature type="helix" evidence="26">
    <location>
        <begin position="177"/>
        <end position="179"/>
    </location>
</feature>
<feature type="strand" evidence="26">
    <location>
        <begin position="181"/>
        <end position="184"/>
    </location>
</feature>
<feature type="helix" evidence="26">
    <location>
        <begin position="187"/>
        <end position="199"/>
    </location>
</feature>
<feature type="turn" evidence="26">
    <location>
        <begin position="200"/>
        <end position="202"/>
    </location>
</feature>
<feature type="helix" evidence="26">
    <location>
        <begin position="208"/>
        <end position="220"/>
    </location>
</feature>
<feature type="helix" evidence="26">
    <location>
        <begin position="228"/>
        <end position="233"/>
    </location>
</feature>
<feature type="strand" evidence="26">
    <location>
        <begin position="240"/>
        <end position="242"/>
    </location>
</feature>
<feature type="strand" evidence="27">
    <location>
        <begin position="244"/>
        <end position="246"/>
    </location>
</feature>
<feature type="strand" evidence="26">
    <location>
        <begin position="248"/>
        <end position="250"/>
    </location>
</feature>
<feature type="helix" evidence="26">
    <location>
        <begin position="254"/>
        <end position="257"/>
    </location>
</feature>
<feature type="helix" evidence="26">
    <location>
        <begin position="259"/>
        <end position="262"/>
    </location>
</feature>
<feature type="helix" evidence="26">
    <location>
        <begin position="265"/>
        <end position="268"/>
    </location>
</feature>
<feature type="helix" evidence="26">
    <location>
        <begin position="275"/>
        <end position="284"/>
    </location>
</feature>
<feature type="helix" evidence="26">
    <location>
        <begin position="288"/>
        <end position="296"/>
    </location>
</feature>
<feature type="strand" evidence="26">
    <location>
        <begin position="298"/>
        <end position="302"/>
    </location>
</feature>
<feature type="helix" evidence="26">
    <location>
        <begin position="303"/>
        <end position="306"/>
    </location>
</feature>